<reference key="1">
    <citation type="journal article" date="1991" name="J. Bacteriol.">
        <title>Characterization and mutagenesis of sulfur-regulated genes in a cyanobacterium: evidence for function in sulfate transport.</title>
        <authorList>
            <person name="Laudenbach D.E."/>
            <person name="Grossman A.R."/>
        </authorList>
    </citation>
    <scope>NUCLEOTIDE SEQUENCE [GENOMIC DNA]</scope>
</reference>
<reference key="2">
    <citation type="submission" date="2005-08" db="EMBL/GenBank/DDBJ databases">
        <title>Complete sequence of chromosome 1 of Synechococcus elongatus PCC 7942.</title>
        <authorList>
            <consortium name="US DOE Joint Genome Institute"/>
            <person name="Copeland A."/>
            <person name="Lucas S."/>
            <person name="Lapidus A."/>
            <person name="Barry K."/>
            <person name="Detter J.C."/>
            <person name="Glavina T."/>
            <person name="Hammon N."/>
            <person name="Israni S."/>
            <person name="Pitluck S."/>
            <person name="Schmutz J."/>
            <person name="Larimer F."/>
            <person name="Land M."/>
            <person name="Kyrpides N."/>
            <person name="Lykidis A."/>
            <person name="Golden S."/>
            <person name="Richardson P."/>
        </authorList>
    </citation>
    <scope>NUCLEOTIDE SEQUENCE [LARGE SCALE GENOMIC DNA]</scope>
    <source>
        <strain>ATCC 33912 / PCC 7942 / FACHB-805</strain>
    </source>
</reference>
<dbReference type="EMBL" id="M65247">
    <property type="protein sequence ID" value="AAA73045.1"/>
    <property type="molecule type" value="Genomic_DNA"/>
</dbReference>
<dbReference type="EMBL" id="CP000100">
    <property type="protein sequence ID" value="ABB57713.1"/>
    <property type="molecule type" value="Genomic_DNA"/>
</dbReference>
<dbReference type="RefSeq" id="WP_011378141.1">
    <property type="nucleotide sequence ID" value="NZ_JACJTX010000001.1"/>
</dbReference>
<dbReference type="SMR" id="P27368"/>
<dbReference type="STRING" id="1140.Synpcc7942_1683"/>
<dbReference type="PaxDb" id="1140-Synpcc7942_1683"/>
<dbReference type="KEGG" id="syf:Synpcc7942_1683"/>
<dbReference type="eggNOG" id="COG1135">
    <property type="taxonomic scope" value="Bacteria"/>
</dbReference>
<dbReference type="HOGENOM" id="CLU_168129_0_0_3"/>
<dbReference type="OrthoDB" id="457861at2"/>
<dbReference type="BioCyc" id="SYNEL:SYNPCC7942_1683-MONOMER"/>
<dbReference type="Proteomes" id="UP000889800">
    <property type="component" value="Chromosome"/>
</dbReference>
<dbReference type="Gene3D" id="3.30.70.260">
    <property type="match status" value="1"/>
</dbReference>
<dbReference type="InterPro" id="IPR045865">
    <property type="entry name" value="ACT-like_dom_sf"/>
</dbReference>
<dbReference type="InterPro" id="IPR018449">
    <property type="entry name" value="NIL_domain"/>
</dbReference>
<dbReference type="Pfam" id="PF09383">
    <property type="entry name" value="NIL"/>
    <property type="match status" value="1"/>
</dbReference>
<dbReference type="SMART" id="SM00930">
    <property type="entry name" value="NIL"/>
    <property type="match status" value="1"/>
</dbReference>
<dbReference type="SUPFAM" id="SSF55021">
    <property type="entry name" value="ACT-like"/>
    <property type="match status" value="1"/>
</dbReference>
<proteinExistence type="predicted"/>
<name>Y1683_SYNE7</name>
<gene>
    <name type="ordered locus">Synpcc7942_1683</name>
</gene>
<feature type="chain" id="PRO_0000157901" description="Uncharacterized protein Synpcc7942_1683">
    <location>
        <begin position="1"/>
        <end position="81"/>
    </location>
</feature>
<accession>P27368</accession>
<accession>Q31MK6</accession>
<evidence type="ECO:0000305" key="1"/>
<comment type="function">
    <text>May have a regulatory function.</text>
</comment>
<comment type="similarity">
    <text evidence="1">To Synechocystis PCC 6803 ssr2439.</text>
</comment>
<keyword id="KW-1185">Reference proteome</keyword>
<keyword id="KW-0764">Sulfate transport</keyword>
<keyword id="KW-0813">Transport</keyword>
<sequence>MATLRIRLQVPKKYRDQPLMGDVLASCQLQFNILAAHLGPNREEDGWFDVMLTGTSEDITAALAVLRDRDIELWSDTEDEF</sequence>
<protein>
    <recommendedName>
        <fullName>Uncharacterized protein Synpcc7942_1683</fullName>
    </recommendedName>
    <alternativeName>
        <fullName>ORF 81</fullName>
    </alternativeName>
</protein>
<organism>
    <name type="scientific">Synechococcus elongatus (strain ATCC 33912 / PCC 7942 / FACHB-805)</name>
    <name type="common">Anacystis nidulans R2</name>
    <dbReference type="NCBI Taxonomy" id="1140"/>
    <lineage>
        <taxon>Bacteria</taxon>
        <taxon>Bacillati</taxon>
        <taxon>Cyanobacteriota</taxon>
        <taxon>Cyanophyceae</taxon>
        <taxon>Synechococcales</taxon>
        <taxon>Synechococcaceae</taxon>
        <taxon>Synechococcus</taxon>
    </lineage>
</organism>